<feature type="initiator methionine" description="Removed" evidence="1 2">
    <location>
        <position position="1"/>
    </location>
</feature>
<feature type="chain" id="PRO_0000103266" description="Branched-chain-amino-acid aminotransferase">
    <location>
        <begin position="2"/>
        <end position="309"/>
    </location>
</feature>
<feature type="modified residue" description="N6-(pyridoxal phosphate)lysine">
    <location>
        <position position="160"/>
    </location>
</feature>
<organism>
    <name type="scientific">Salmonella typhimurium (strain LT2 / SGSC1412 / ATCC 700720)</name>
    <dbReference type="NCBI Taxonomy" id="99287"/>
    <lineage>
        <taxon>Bacteria</taxon>
        <taxon>Pseudomonadati</taxon>
        <taxon>Pseudomonadota</taxon>
        <taxon>Gammaproteobacteria</taxon>
        <taxon>Enterobacterales</taxon>
        <taxon>Enterobacteriaceae</taxon>
        <taxon>Salmonella</taxon>
    </lineage>
</organism>
<dbReference type="EC" id="2.6.1.42"/>
<dbReference type="EMBL" id="AF233324">
    <property type="protein sequence ID" value="AAF33481.1"/>
    <property type="molecule type" value="Genomic_DNA"/>
</dbReference>
<dbReference type="EMBL" id="AE006468">
    <property type="protein sequence ID" value="AAL22753.1"/>
    <property type="molecule type" value="Genomic_DNA"/>
</dbReference>
<dbReference type="PIR" id="A34082">
    <property type="entry name" value="A34082"/>
</dbReference>
<dbReference type="RefSeq" id="NP_462794.1">
    <property type="nucleotide sequence ID" value="NC_003197.2"/>
</dbReference>
<dbReference type="RefSeq" id="WP_000208528.1">
    <property type="nucleotide sequence ID" value="NC_003197.2"/>
</dbReference>
<dbReference type="SMR" id="P0A1A5"/>
<dbReference type="STRING" id="99287.STM3903"/>
<dbReference type="PaxDb" id="99287-STM3903"/>
<dbReference type="GeneID" id="1255429"/>
<dbReference type="KEGG" id="stm:STM3903"/>
<dbReference type="PATRIC" id="fig|99287.12.peg.4125"/>
<dbReference type="HOGENOM" id="CLU_020844_3_1_6"/>
<dbReference type="OMA" id="LTEVFAC"/>
<dbReference type="PhylomeDB" id="P0A1A5"/>
<dbReference type="BioCyc" id="SENT99287:STM3903-MONOMER"/>
<dbReference type="UniPathway" id="UPA00047">
    <property type="reaction ID" value="UER00058"/>
</dbReference>
<dbReference type="UniPathway" id="UPA00048">
    <property type="reaction ID" value="UER00073"/>
</dbReference>
<dbReference type="UniPathway" id="UPA00049">
    <property type="reaction ID" value="UER00062"/>
</dbReference>
<dbReference type="Proteomes" id="UP000001014">
    <property type="component" value="Chromosome"/>
</dbReference>
<dbReference type="GO" id="GO:0005829">
    <property type="term" value="C:cytosol"/>
    <property type="evidence" value="ECO:0000318"/>
    <property type="project" value="GO_Central"/>
</dbReference>
<dbReference type="GO" id="GO:0004084">
    <property type="term" value="F:branched-chain-amino-acid transaminase activity"/>
    <property type="evidence" value="ECO:0000318"/>
    <property type="project" value="GO_Central"/>
</dbReference>
<dbReference type="GO" id="GO:0052656">
    <property type="term" value="F:L-isoleucine-2-oxoglutarate transaminase activity"/>
    <property type="evidence" value="ECO:0007669"/>
    <property type="project" value="RHEA"/>
</dbReference>
<dbReference type="GO" id="GO:0052654">
    <property type="term" value="F:L-leucine-2-oxoglutarate transaminase activity"/>
    <property type="evidence" value="ECO:0007669"/>
    <property type="project" value="RHEA"/>
</dbReference>
<dbReference type="GO" id="GO:0052655">
    <property type="term" value="F:L-valine-2-oxoglutarate transaminase activity"/>
    <property type="evidence" value="ECO:0007669"/>
    <property type="project" value="RHEA"/>
</dbReference>
<dbReference type="GO" id="GO:0006532">
    <property type="term" value="P:aspartate biosynthetic process"/>
    <property type="evidence" value="ECO:0000318"/>
    <property type="project" value="GO_Central"/>
</dbReference>
<dbReference type="GO" id="GO:0009097">
    <property type="term" value="P:isoleucine biosynthetic process"/>
    <property type="evidence" value="ECO:0007669"/>
    <property type="project" value="UniProtKB-UniPathway"/>
</dbReference>
<dbReference type="GO" id="GO:0009098">
    <property type="term" value="P:L-leucine biosynthetic process"/>
    <property type="evidence" value="ECO:0000318"/>
    <property type="project" value="GO_Central"/>
</dbReference>
<dbReference type="GO" id="GO:0009099">
    <property type="term" value="P:L-valine biosynthetic process"/>
    <property type="evidence" value="ECO:0000318"/>
    <property type="project" value="GO_Central"/>
</dbReference>
<dbReference type="CDD" id="cd01557">
    <property type="entry name" value="BCAT_beta_family"/>
    <property type="match status" value="1"/>
</dbReference>
<dbReference type="FunFam" id="3.20.10.10:FF:000001">
    <property type="entry name" value="Branched-chain-amino-acid aminotransferase"/>
    <property type="match status" value="1"/>
</dbReference>
<dbReference type="FunFam" id="3.30.470.10:FF:000001">
    <property type="entry name" value="Branched-chain-amino-acid aminotransferase"/>
    <property type="match status" value="1"/>
</dbReference>
<dbReference type="Gene3D" id="3.30.470.10">
    <property type="match status" value="1"/>
</dbReference>
<dbReference type="Gene3D" id="3.20.10.10">
    <property type="entry name" value="D-amino Acid Aminotransferase, subunit A, domain 2"/>
    <property type="match status" value="1"/>
</dbReference>
<dbReference type="InterPro" id="IPR001544">
    <property type="entry name" value="Aminotrans_IV"/>
</dbReference>
<dbReference type="InterPro" id="IPR018300">
    <property type="entry name" value="Aminotrans_IV_CS"/>
</dbReference>
<dbReference type="InterPro" id="IPR036038">
    <property type="entry name" value="Aminotransferase-like"/>
</dbReference>
<dbReference type="InterPro" id="IPR005785">
    <property type="entry name" value="B_amino_transI"/>
</dbReference>
<dbReference type="InterPro" id="IPR043132">
    <property type="entry name" value="BCAT-like_C"/>
</dbReference>
<dbReference type="InterPro" id="IPR043131">
    <property type="entry name" value="BCAT-like_N"/>
</dbReference>
<dbReference type="InterPro" id="IPR033939">
    <property type="entry name" value="BCAT_family"/>
</dbReference>
<dbReference type="InterPro" id="IPR050571">
    <property type="entry name" value="Class-IV_PLP-Dep_Aminotrnsfr"/>
</dbReference>
<dbReference type="NCBIfam" id="TIGR01122">
    <property type="entry name" value="ilvE_I"/>
    <property type="match status" value="1"/>
</dbReference>
<dbReference type="NCBIfam" id="NF005146">
    <property type="entry name" value="PRK06606.1"/>
    <property type="match status" value="1"/>
</dbReference>
<dbReference type="PANTHER" id="PTHR42743">
    <property type="entry name" value="AMINO-ACID AMINOTRANSFERASE"/>
    <property type="match status" value="1"/>
</dbReference>
<dbReference type="PANTHER" id="PTHR42743:SF11">
    <property type="entry name" value="AMINODEOXYCHORISMATE LYASE"/>
    <property type="match status" value="1"/>
</dbReference>
<dbReference type="Pfam" id="PF01063">
    <property type="entry name" value="Aminotran_4"/>
    <property type="match status" value="1"/>
</dbReference>
<dbReference type="SUPFAM" id="SSF56752">
    <property type="entry name" value="D-aminoacid aminotransferase-like PLP-dependent enzymes"/>
    <property type="match status" value="1"/>
</dbReference>
<dbReference type="PROSITE" id="PS00770">
    <property type="entry name" value="AA_TRANSFER_CLASS_4"/>
    <property type="match status" value="1"/>
</dbReference>
<reference key="1">
    <citation type="journal article" date="2001" name="Nature">
        <title>Complete genome sequence of Salmonella enterica serovar Typhimurium LT2.</title>
        <authorList>
            <person name="McClelland M."/>
            <person name="Sanderson K.E."/>
            <person name="Spieth J."/>
            <person name="Clifton S.W."/>
            <person name="Latreille P."/>
            <person name="Courtney L."/>
            <person name="Porwollik S."/>
            <person name="Ali J."/>
            <person name="Dante M."/>
            <person name="Du F."/>
            <person name="Hou S."/>
            <person name="Layman D."/>
            <person name="Leonard S."/>
            <person name="Nguyen C."/>
            <person name="Scott K."/>
            <person name="Holmes A."/>
            <person name="Grewal N."/>
            <person name="Mulvaney E."/>
            <person name="Ryan E."/>
            <person name="Sun H."/>
            <person name="Florea L."/>
            <person name="Miller W."/>
            <person name="Stoneking T."/>
            <person name="Nhan M."/>
            <person name="Waterston R."/>
            <person name="Wilson R.K."/>
        </authorList>
    </citation>
    <scope>NUCLEOTIDE SEQUENCE [LARGE SCALE GENOMIC DNA]</scope>
    <source>
        <strain>LT2 / SGSC1412 / ATCC 700720</strain>
    </source>
</reference>
<reference key="2">
    <citation type="journal article" date="1989" name="Biochemistry">
        <title>Amino acid sequence of Salmonella typhimurium branched-chain amino acid aminotransferase.</title>
        <authorList>
            <person name="Feild M.J."/>
            <person name="Nguyen D.C."/>
            <person name="Armstrong F.B."/>
        </authorList>
    </citation>
    <scope>PROTEIN SEQUENCE OF 2-309</scope>
</reference>
<reference key="3">
    <citation type="journal article" date="1979" name="Fed. Proc.">
        <title>N-terminal sequence of branched-chain amino acid aminotransferase.</title>
        <authorList>
            <person name="Randall R.R."/>
            <person name="Wallis M.H."/>
            <person name="Young G.J."/>
            <person name="Armstrong F.B."/>
        </authorList>
    </citation>
    <scope>PROTEIN SEQUENCE OF 2-6</scope>
</reference>
<proteinExistence type="evidence at protein level"/>
<accession>P0A1A5</accession>
<accession>P15168</accession>
<accession>Q9L6T0</accession>
<protein>
    <recommendedName>
        <fullName>Branched-chain-amino-acid aminotransferase</fullName>
        <shortName>BCAT</shortName>
        <ecNumber>2.6.1.42</ecNumber>
    </recommendedName>
    <alternativeName>
        <fullName>Transaminase B</fullName>
    </alternativeName>
</protein>
<comment type="function">
    <text>Acts on leucine, isoleucine and valine.</text>
</comment>
<comment type="catalytic activity">
    <reaction>
        <text>L-leucine + 2-oxoglutarate = 4-methyl-2-oxopentanoate + L-glutamate</text>
        <dbReference type="Rhea" id="RHEA:18321"/>
        <dbReference type="ChEBI" id="CHEBI:16810"/>
        <dbReference type="ChEBI" id="CHEBI:17865"/>
        <dbReference type="ChEBI" id="CHEBI:29985"/>
        <dbReference type="ChEBI" id="CHEBI:57427"/>
        <dbReference type="EC" id="2.6.1.42"/>
    </reaction>
</comment>
<comment type="catalytic activity">
    <reaction>
        <text>L-isoleucine + 2-oxoglutarate = (S)-3-methyl-2-oxopentanoate + L-glutamate</text>
        <dbReference type="Rhea" id="RHEA:24801"/>
        <dbReference type="ChEBI" id="CHEBI:16810"/>
        <dbReference type="ChEBI" id="CHEBI:29985"/>
        <dbReference type="ChEBI" id="CHEBI:35146"/>
        <dbReference type="ChEBI" id="CHEBI:58045"/>
        <dbReference type="EC" id="2.6.1.42"/>
    </reaction>
</comment>
<comment type="catalytic activity">
    <reaction>
        <text>L-valine + 2-oxoglutarate = 3-methyl-2-oxobutanoate + L-glutamate</text>
        <dbReference type="Rhea" id="RHEA:24813"/>
        <dbReference type="ChEBI" id="CHEBI:11851"/>
        <dbReference type="ChEBI" id="CHEBI:16810"/>
        <dbReference type="ChEBI" id="CHEBI:29985"/>
        <dbReference type="ChEBI" id="CHEBI:57762"/>
        <dbReference type="EC" id="2.6.1.42"/>
    </reaction>
</comment>
<comment type="cofactor">
    <cofactor>
        <name>pyridoxal 5'-phosphate</name>
        <dbReference type="ChEBI" id="CHEBI:597326"/>
    </cofactor>
</comment>
<comment type="pathway">
    <text>Amino-acid biosynthesis; L-isoleucine biosynthesis; L-isoleucine from 2-oxobutanoate: step 4/4.</text>
</comment>
<comment type="pathway">
    <text>Amino-acid biosynthesis; L-leucine biosynthesis; L-leucine from 3-methyl-2-oxobutanoate: step 4/4.</text>
</comment>
<comment type="pathway">
    <text>Amino-acid biosynthesis; L-valine biosynthesis; L-valine from pyruvate: step 4/4.</text>
</comment>
<comment type="subunit">
    <text>Homohexamer.</text>
</comment>
<comment type="similarity">
    <text evidence="3">Belongs to the class-IV pyridoxal-phosphate-dependent aminotransferase family.</text>
</comment>
<sequence>MTTKKADYIWFNGEMVRWEDAKVHVMSHALHYGTSVFEGIRCYDSHKGPVVFRHREHMQRLRDSAKIYRFPVSQSIDELMEACRDVIRKNNLTSAYIRPLVFVGDVGMGVNPPPGYTTDVIIAAFPWGAYLGAEALDQGIDAMVSSWNRAAPNTIPTAAKAGGNYLSSLLVGSEARRHGYQEGIALDVNGYISEGAGENLFEVKDGVLFTPPFTSSALPGITRDAIIKLAKELGIEVREQVLSRESLYLADEVFMSGTAAEITPVRSVDGIQVGEGRCGPVTKRIQQAFFGLFTGETEDKWGWLDPVNS</sequence>
<keyword id="KW-0028">Amino-acid biosynthesis</keyword>
<keyword id="KW-0032">Aminotransferase</keyword>
<keyword id="KW-0100">Branched-chain amino acid biosynthesis</keyword>
<keyword id="KW-0903">Direct protein sequencing</keyword>
<keyword id="KW-0663">Pyridoxal phosphate</keyword>
<keyword id="KW-1185">Reference proteome</keyword>
<keyword id="KW-0808">Transferase</keyword>
<name>ILVE_SALTY</name>
<gene>
    <name type="primary">ilvE</name>
    <name type="ordered locus">STM3903</name>
    <name type="ORF">STMD1.89</name>
</gene>
<evidence type="ECO:0000269" key="1">
    <source>
    </source>
</evidence>
<evidence type="ECO:0000269" key="2">
    <source ref="3"/>
</evidence>
<evidence type="ECO:0000305" key="3"/>